<evidence type="ECO:0000255" key="1">
    <source>
        <dbReference type="HAMAP-Rule" id="MF_02006"/>
    </source>
</evidence>
<reference key="1">
    <citation type="journal article" date="2008" name="Genome Res.">
        <title>Chlamydia trachomatis: genome sequence analysis of lymphogranuloma venereum isolates.</title>
        <authorList>
            <person name="Thomson N.R."/>
            <person name="Holden M.T.G."/>
            <person name="Carder C."/>
            <person name="Lennard N."/>
            <person name="Lockey S.J."/>
            <person name="Marsh P."/>
            <person name="Skipp P."/>
            <person name="O'Connor C.D."/>
            <person name="Goodhead I."/>
            <person name="Norbertzcak H."/>
            <person name="Harris B."/>
            <person name="Ormond D."/>
            <person name="Rance R."/>
            <person name="Quail M.A."/>
            <person name="Parkhill J."/>
            <person name="Stephens R.S."/>
            <person name="Clarke I.N."/>
        </authorList>
    </citation>
    <scope>NUCLEOTIDE SEQUENCE [LARGE SCALE GENOMIC DNA]</scope>
    <source>
        <strain>ATCC VR-902B / DSM 19102 / 434/Bu</strain>
    </source>
</reference>
<feature type="chain" id="PRO_1000189269" description="Tyrosine--tRNA ligase">
    <location>
        <begin position="1"/>
        <end position="412"/>
    </location>
</feature>
<feature type="domain" description="S4 RNA-binding" evidence="1">
    <location>
        <begin position="345"/>
        <end position="411"/>
    </location>
</feature>
<feature type="short sequence motif" description="'HIGH' region">
    <location>
        <begin position="36"/>
        <end position="45"/>
    </location>
</feature>
<feature type="short sequence motif" description="'KMSKS' region">
    <location>
        <begin position="222"/>
        <end position="226"/>
    </location>
</feature>
<feature type="binding site" evidence="1">
    <location>
        <position position="31"/>
    </location>
    <ligand>
        <name>L-tyrosine</name>
        <dbReference type="ChEBI" id="CHEBI:58315"/>
    </ligand>
</feature>
<feature type="binding site" evidence="1">
    <location>
        <position position="162"/>
    </location>
    <ligand>
        <name>L-tyrosine</name>
        <dbReference type="ChEBI" id="CHEBI:58315"/>
    </ligand>
</feature>
<feature type="binding site" evidence="1">
    <location>
        <position position="166"/>
    </location>
    <ligand>
        <name>L-tyrosine</name>
        <dbReference type="ChEBI" id="CHEBI:58315"/>
    </ligand>
</feature>
<feature type="binding site" evidence="1">
    <location>
        <position position="225"/>
    </location>
    <ligand>
        <name>ATP</name>
        <dbReference type="ChEBI" id="CHEBI:30616"/>
    </ligand>
</feature>
<dbReference type="EC" id="6.1.1.1" evidence="1"/>
<dbReference type="EMBL" id="AM884176">
    <property type="protein sequence ID" value="CAP03757.1"/>
    <property type="molecule type" value="Genomic_DNA"/>
</dbReference>
<dbReference type="RefSeq" id="WP_009873530.1">
    <property type="nucleotide sequence ID" value="NC_010287.1"/>
</dbReference>
<dbReference type="RefSeq" id="YP_001654401.1">
    <property type="nucleotide sequence ID" value="NC_010287.1"/>
</dbReference>
<dbReference type="SMR" id="B0B9H0"/>
<dbReference type="KEGG" id="ctb:CTL0318"/>
<dbReference type="PATRIC" id="fig|471472.4.peg.345"/>
<dbReference type="HOGENOM" id="CLU_024003_0_3_0"/>
<dbReference type="Proteomes" id="UP001154402">
    <property type="component" value="Chromosome"/>
</dbReference>
<dbReference type="GO" id="GO:0005829">
    <property type="term" value="C:cytosol"/>
    <property type="evidence" value="ECO:0007669"/>
    <property type="project" value="TreeGrafter"/>
</dbReference>
<dbReference type="GO" id="GO:0005524">
    <property type="term" value="F:ATP binding"/>
    <property type="evidence" value="ECO:0007669"/>
    <property type="project" value="UniProtKB-UniRule"/>
</dbReference>
<dbReference type="GO" id="GO:0003723">
    <property type="term" value="F:RNA binding"/>
    <property type="evidence" value="ECO:0007669"/>
    <property type="project" value="UniProtKB-KW"/>
</dbReference>
<dbReference type="GO" id="GO:0004831">
    <property type="term" value="F:tyrosine-tRNA ligase activity"/>
    <property type="evidence" value="ECO:0007669"/>
    <property type="project" value="UniProtKB-UniRule"/>
</dbReference>
<dbReference type="GO" id="GO:0006437">
    <property type="term" value="P:tyrosyl-tRNA aminoacylation"/>
    <property type="evidence" value="ECO:0007669"/>
    <property type="project" value="UniProtKB-UniRule"/>
</dbReference>
<dbReference type="CDD" id="cd00165">
    <property type="entry name" value="S4"/>
    <property type="match status" value="1"/>
</dbReference>
<dbReference type="CDD" id="cd00805">
    <property type="entry name" value="TyrRS_core"/>
    <property type="match status" value="1"/>
</dbReference>
<dbReference type="FunFam" id="3.40.50.620:FF:000287">
    <property type="entry name" value="Tyrosine--tRNA ligase"/>
    <property type="match status" value="1"/>
</dbReference>
<dbReference type="Gene3D" id="3.40.50.620">
    <property type="entry name" value="HUPs"/>
    <property type="match status" value="1"/>
</dbReference>
<dbReference type="Gene3D" id="3.10.290.10">
    <property type="entry name" value="RNA-binding S4 domain"/>
    <property type="match status" value="1"/>
</dbReference>
<dbReference type="Gene3D" id="1.10.240.10">
    <property type="entry name" value="Tyrosyl-Transfer RNA Synthetase"/>
    <property type="match status" value="1"/>
</dbReference>
<dbReference type="HAMAP" id="MF_02006">
    <property type="entry name" value="Tyr_tRNA_synth_type1"/>
    <property type="match status" value="1"/>
</dbReference>
<dbReference type="InterPro" id="IPR002305">
    <property type="entry name" value="aa-tRNA-synth_Ic"/>
</dbReference>
<dbReference type="InterPro" id="IPR014729">
    <property type="entry name" value="Rossmann-like_a/b/a_fold"/>
</dbReference>
<dbReference type="InterPro" id="IPR002942">
    <property type="entry name" value="S4_RNA-bd"/>
</dbReference>
<dbReference type="InterPro" id="IPR036986">
    <property type="entry name" value="S4_RNA-bd_sf"/>
</dbReference>
<dbReference type="InterPro" id="IPR002307">
    <property type="entry name" value="Tyr-tRNA-ligase"/>
</dbReference>
<dbReference type="InterPro" id="IPR024088">
    <property type="entry name" value="Tyr-tRNA-ligase_bac-type"/>
</dbReference>
<dbReference type="InterPro" id="IPR024107">
    <property type="entry name" value="Tyr-tRNA-ligase_bac_1"/>
</dbReference>
<dbReference type="NCBIfam" id="TIGR00234">
    <property type="entry name" value="tyrS"/>
    <property type="match status" value="1"/>
</dbReference>
<dbReference type="PANTHER" id="PTHR11766:SF0">
    <property type="entry name" value="TYROSINE--TRNA LIGASE, MITOCHONDRIAL"/>
    <property type="match status" value="1"/>
</dbReference>
<dbReference type="PANTHER" id="PTHR11766">
    <property type="entry name" value="TYROSYL-TRNA SYNTHETASE"/>
    <property type="match status" value="1"/>
</dbReference>
<dbReference type="Pfam" id="PF01479">
    <property type="entry name" value="S4"/>
    <property type="match status" value="1"/>
</dbReference>
<dbReference type="Pfam" id="PF00579">
    <property type="entry name" value="tRNA-synt_1b"/>
    <property type="match status" value="1"/>
</dbReference>
<dbReference type="PRINTS" id="PR01040">
    <property type="entry name" value="TRNASYNTHTYR"/>
</dbReference>
<dbReference type="SMART" id="SM00363">
    <property type="entry name" value="S4"/>
    <property type="match status" value="1"/>
</dbReference>
<dbReference type="SUPFAM" id="SSF55174">
    <property type="entry name" value="Alpha-L RNA-binding motif"/>
    <property type="match status" value="1"/>
</dbReference>
<dbReference type="SUPFAM" id="SSF52374">
    <property type="entry name" value="Nucleotidylyl transferase"/>
    <property type="match status" value="1"/>
</dbReference>
<dbReference type="PROSITE" id="PS50889">
    <property type="entry name" value="S4"/>
    <property type="match status" value="1"/>
</dbReference>
<keyword id="KW-0030">Aminoacyl-tRNA synthetase</keyword>
<keyword id="KW-0067">ATP-binding</keyword>
<keyword id="KW-0963">Cytoplasm</keyword>
<keyword id="KW-0436">Ligase</keyword>
<keyword id="KW-0547">Nucleotide-binding</keyword>
<keyword id="KW-0648">Protein biosynthesis</keyword>
<keyword id="KW-0694">RNA-binding</keyword>
<comment type="function">
    <text evidence="1">Catalyzes the attachment of tyrosine to tRNA(Tyr) in a two-step reaction: tyrosine is first activated by ATP to form Tyr-AMP and then transferred to the acceptor end of tRNA(Tyr).</text>
</comment>
<comment type="catalytic activity">
    <reaction evidence="1">
        <text>tRNA(Tyr) + L-tyrosine + ATP = L-tyrosyl-tRNA(Tyr) + AMP + diphosphate + H(+)</text>
        <dbReference type="Rhea" id="RHEA:10220"/>
        <dbReference type="Rhea" id="RHEA-COMP:9706"/>
        <dbReference type="Rhea" id="RHEA-COMP:9707"/>
        <dbReference type="ChEBI" id="CHEBI:15378"/>
        <dbReference type="ChEBI" id="CHEBI:30616"/>
        <dbReference type="ChEBI" id="CHEBI:33019"/>
        <dbReference type="ChEBI" id="CHEBI:58315"/>
        <dbReference type="ChEBI" id="CHEBI:78442"/>
        <dbReference type="ChEBI" id="CHEBI:78536"/>
        <dbReference type="ChEBI" id="CHEBI:456215"/>
        <dbReference type="EC" id="6.1.1.1"/>
    </reaction>
</comment>
<comment type="subunit">
    <text evidence="1">Homodimer.</text>
</comment>
<comment type="subcellular location">
    <subcellularLocation>
        <location evidence="1">Cytoplasm</location>
    </subcellularLocation>
</comment>
<comment type="similarity">
    <text evidence="1">Belongs to the class-I aminoacyl-tRNA synthetase family. TyrS type 1 subfamily.</text>
</comment>
<sequence length="412" mass="45435">MQQLIDNLKKRGILDNSSAGLESLTVPVSAYLGFDPTAPSLHIGHWIGICFLRRLAAYGITPVALVGGATGMIGDPSGKSVERSLLDQAQVLDNSKKIAAALASYLPGIRIVNNADWLGSLSMVDFLRDVGKHFRLGSMLAKDVVKQRVYSEEGISYTEFSYLLLQSYDFAHLFKEHNVVLQCGGSDQWGNITSGIDYIRRRGLGQAYGLTYPLLTDSKGKKIGKTESGTIWLDPALTPPYELFQYFLRLPDQEISKVMRTLTLLDNEEIFALDERLTSDPQAVKKYIAEVIVKDVHGSEGLAQAQAATESFFASKGKSITEAELVALVESGVGVKVARADLIGKRWLDIVVELGFCSSRGQARRLIQQRGLYINQEPLADEQSILDGTQLCFDRYVLLSQGKRKKQVIDLN</sequence>
<accession>B0B9H0</accession>
<protein>
    <recommendedName>
        <fullName evidence="1">Tyrosine--tRNA ligase</fullName>
        <ecNumber evidence="1">6.1.1.1</ecNumber>
    </recommendedName>
    <alternativeName>
        <fullName evidence="1">Tyrosyl-tRNA synthetase</fullName>
        <shortName evidence="1">TyrRS</shortName>
    </alternativeName>
</protein>
<name>SYY_CHLT2</name>
<organism>
    <name type="scientific">Chlamydia trachomatis serovar L2 (strain ATCC VR-902B / DSM 19102 / 434/Bu)</name>
    <dbReference type="NCBI Taxonomy" id="471472"/>
    <lineage>
        <taxon>Bacteria</taxon>
        <taxon>Pseudomonadati</taxon>
        <taxon>Chlamydiota</taxon>
        <taxon>Chlamydiia</taxon>
        <taxon>Chlamydiales</taxon>
        <taxon>Chlamydiaceae</taxon>
        <taxon>Chlamydia/Chlamydophila group</taxon>
        <taxon>Chlamydia</taxon>
    </lineage>
</organism>
<proteinExistence type="inferred from homology"/>
<gene>
    <name evidence="1" type="primary">tyrS</name>
    <name type="ordered locus">CTL0318</name>
</gene>